<sequence>MIARILDGRTCAEKVKARVKENIRLLQEKGLPSPGLAVILVGNDPASATYVAHKERACQAVGIRSTVYRMPNTITESELASKIDECNRDSNTHGILLQLPLPAHIDPANLLERIRPDKDVDGFHPYNLGRLVQRRPALRPCTPYGVMTLLTETHENLEGKHAVIVGASNIVGRPMALELLLAKCTVTVCHRFTRDLAEHVKSAELLIVAIGKPGIIQSEWIKPGAIVIDVGFSRLSPNKIAGDIDFETAKERASWITPVPGGVGPMTVATLLENTLQAAQTFL</sequence>
<evidence type="ECO:0000255" key="1">
    <source>
        <dbReference type="HAMAP-Rule" id="MF_01576"/>
    </source>
</evidence>
<dbReference type="EC" id="1.5.1.5" evidence="1"/>
<dbReference type="EC" id="3.5.4.9" evidence="1"/>
<dbReference type="EMBL" id="CP000890">
    <property type="protein sequence ID" value="ABX78853.1"/>
    <property type="molecule type" value="Genomic_DNA"/>
</dbReference>
<dbReference type="RefSeq" id="WP_010957497.1">
    <property type="nucleotide sequence ID" value="NC_010117.1"/>
</dbReference>
<dbReference type="SMR" id="A9NB47"/>
<dbReference type="KEGG" id="cbs:COXBURSA331_A0419"/>
<dbReference type="HOGENOM" id="CLU_034045_2_1_6"/>
<dbReference type="UniPathway" id="UPA00193"/>
<dbReference type="GO" id="GO:0005829">
    <property type="term" value="C:cytosol"/>
    <property type="evidence" value="ECO:0007669"/>
    <property type="project" value="TreeGrafter"/>
</dbReference>
<dbReference type="GO" id="GO:0004477">
    <property type="term" value="F:methenyltetrahydrofolate cyclohydrolase activity"/>
    <property type="evidence" value="ECO:0007669"/>
    <property type="project" value="UniProtKB-UniRule"/>
</dbReference>
<dbReference type="GO" id="GO:0004488">
    <property type="term" value="F:methylenetetrahydrofolate dehydrogenase (NADP+) activity"/>
    <property type="evidence" value="ECO:0007669"/>
    <property type="project" value="UniProtKB-UniRule"/>
</dbReference>
<dbReference type="GO" id="GO:0000105">
    <property type="term" value="P:L-histidine biosynthetic process"/>
    <property type="evidence" value="ECO:0007669"/>
    <property type="project" value="UniProtKB-KW"/>
</dbReference>
<dbReference type="GO" id="GO:0009086">
    <property type="term" value="P:methionine biosynthetic process"/>
    <property type="evidence" value="ECO:0007669"/>
    <property type="project" value="UniProtKB-KW"/>
</dbReference>
<dbReference type="GO" id="GO:0006164">
    <property type="term" value="P:purine nucleotide biosynthetic process"/>
    <property type="evidence" value="ECO:0007669"/>
    <property type="project" value="UniProtKB-KW"/>
</dbReference>
<dbReference type="GO" id="GO:0035999">
    <property type="term" value="P:tetrahydrofolate interconversion"/>
    <property type="evidence" value="ECO:0007669"/>
    <property type="project" value="UniProtKB-UniRule"/>
</dbReference>
<dbReference type="CDD" id="cd01080">
    <property type="entry name" value="NAD_bind_m-THF_DH_Cyclohyd"/>
    <property type="match status" value="1"/>
</dbReference>
<dbReference type="FunFam" id="3.40.50.720:FF:000006">
    <property type="entry name" value="Bifunctional protein FolD"/>
    <property type="match status" value="1"/>
</dbReference>
<dbReference type="FunFam" id="3.40.50.10860:FF:000005">
    <property type="entry name" value="C-1-tetrahydrofolate synthase, cytoplasmic, putative"/>
    <property type="match status" value="1"/>
</dbReference>
<dbReference type="Gene3D" id="3.40.50.10860">
    <property type="entry name" value="Leucine Dehydrogenase, chain A, domain 1"/>
    <property type="match status" value="1"/>
</dbReference>
<dbReference type="Gene3D" id="3.40.50.720">
    <property type="entry name" value="NAD(P)-binding Rossmann-like Domain"/>
    <property type="match status" value="1"/>
</dbReference>
<dbReference type="HAMAP" id="MF_01576">
    <property type="entry name" value="THF_DHG_CYH"/>
    <property type="match status" value="1"/>
</dbReference>
<dbReference type="InterPro" id="IPR046346">
    <property type="entry name" value="Aminoacid_DH-like_N_sf"/>
</dbReference>
<dbReference type="InterPro" id="IPR036291">
    <property type="entry name" value="NAD(P)-bd_dom_sf"/>
</dbReference>
<dbReference type="InterPro" id="IPR000672">
    <property type="entry name" value="THF_DH/CycHdrlase"/>
</dbReference>
<dbReference type="InterPro" id="IPR020630">
    <property type="entry name" value="THF_DH/CycHdrlase_cat_dom"/>
</dbReference>
<dbReference type="InterPro" id="IPR020867">
    <property type="entry name" value="THF_DH/CycHdrlase_CS"/>
</dbReference>
<dbReference type="InterPro" id="IPR020631">
    <property type="entry name" value="THF_DH/CycHdrlase_NAD-bd_dom"/>
</dbReference>
<dbReference type="NCBIfam" id="NF008058">
    <property type="entry name" value="PRK10792.1"/>
    <property type="match status" value="1"/>
</dbReference>
<dbReference type="NCBIfam" id="NF010783">
    <property type="entry name" value="PRK14186.1"/>
    <property type="match status" value="1"/>
</dbReference>
<dbReference type="PANTHER" id="PTHR48099:SF5">
    <property type="entry name" value="C-1-TETRAHYDROFOLATE SYNTHASE, CYTOPLASMIC"/>
    <property type="match status" value="1"/>
</dbReference>
<dbReference type="PANTHER" id="PTHR48099">
    <property type="entry name" value="C-1-TETRAHYDROFOLATE SYNTHASE, CYTOPLASMIC-RELATED"/>
    <property type="match status" value="1"/>
</dbReference>
<dbReference type="Pfam" id="PF00763">
    <property type="entry name" value="THF_DHG_CYH"/>
    <property type="match status" value="1"/>
</dbReference>
<dbReference type="Pfam" id="PF02882">
    <property type="entry name" value="THF_DHG_CYH_C"/>
    <property type="match status" value="1"/>
</dbReference>
<dbReference type="PRINTS" id="PR00085">
    <property type="entry name" value="THFDHDRGNASE"/>
</dbReference>
<dbReference type="SUPFAM" id="SSF53223">
    <property type="entry name" value="Aminoacid dehydrogenase-like, N-terminal domain"/>
    <property type="match status" value="1"/>
</dbReference>
<dbReference type="SUPFAM" id="SSF51735">
    <property type="entry name" value="NAD(P)-binding Rossmann-fold domains"/>
    <property type="match status" value="1"/>
</dbReference>
<dbReference type="PROSITE" id="PS00767">
    <property type="entry name" value="THF_DHG_CYH_2"/>
    <property type="match status" value="1"/>
</dbReference>
<feature type="chain" id="PRO_1000087898" description="Bifunctional protein FolD">
    <location>
        <begin position="1"/>
        <end position="283"/>
    </location>
</feature>
<feature type="binding site" evidence="1">
    <location>
        <begin position="166"/>
        <end position="168"/>
    </location>
    <ligand>
        <name>NADP(+)</name>
        <dbReference type="ChEBI" id="CHEBI:58349"/>
    </ligand>
</feature>
<keyword id="KW-0028">Amino-acid biosynthesis</keyword>
<keyword id="KW-0368">Histidine biosynthesis</keyword>
<keyword id="KW-0378">Hydrolase</keyword>
<keyword id="KW-0486">Methionine biosynthesis</keyword>
<keyword id="KW-0511">Multifunctional enzyme</keyword>
<keyword id="KW-0521">NADP</keyword>
<keyword id="KW-0554">One-carbon metabolism</keyword>
<keyword id="KW-0560">Oxidoreductase</keyword>
<keyword id="KW-0658">Purine biosynthesis</keyword>
<name>FOLD_COXBR</name>
<organism>
    <name type="scientific">Coxiella burnetii (strain RSA 331 / Henzerling II)</name>
    <dbReference type="NCBI Taxonomy" id="360115"/>
    <lineage>
        <taxon>Bacteria</taxon>
        <taxon>Pseudomonadati</taxon>
        <taxon>Pseudomonadota</taxon>
        <taxon>Gammaproteobacteria</taxon>
        <taxon>Legionellales</taxon>
        <taxon>Coxiellaceae</taxon>
        <taxon>Coxiella</taxon>
    </lineage>
</organism>
<gene>
    <name evidence="1" type="primary">folD</name>
    <name type="ordered locus">COXBURSA331_A0419</name>
</gene>
<proteinExistence type="inferred from homology"/>
<comment type="function">
    <text evidence="1">Catalyzes the oxidation of 5,10-methylenetetrahydrofolate to 5,10-methenyltetrahydrofolate and then the hydrolysis of 5,10-methenyltetrahydrofolate to 10-formyltetrahydrofolate.</text>
</comment>
<comment type="catalytic activity">
    <reaction evidence="1">
        <text>(6R)-5,10-methylene-5,6,7,8-tetrahydrofolate + NADP(+) = (6R)-5,10-methenyltetrahydrofolate + NADPH</text>
        <dbReference type="Rhea" id="RHEA:22812"/>
        <dbReference type="ChEBI" id="CHEBI:15636"/>
        <dbReference type="ChEBI" id="CHEBI:57455"/>
        <dbReference type="ChEBI" id="CHEBI:57783"/>
        <dbReference type="ChEBI" id="CHEBI:58349"/>
        <dbReference type="EC" id="1.5.1.5"/>
    </reaction>
</comment>
<comment type="catalytic activity">
    <reaction evidence="1">
        <text>(6R)-5,10-methenyltetrahydrofolate + H2O = (6R)-10-formyltetrahydrofolate + H(+)</text>
        <dbReference type="Rhea" id="RHEA:23700"/>
        <dbReference type="ChEBI" id="CHEBI:15377"/>
        <dbReference type="ChEBI" id="CHEBI:15378"/>
        <dbReference type="ChEBI" id="CHEBI:57455"/>
        <dbReference type="ChEBI" id="CHEBI:195366"/>
        <dbReference type="EC" id="3.5.4.9"/>
    </reaction>
</comment>
<comment type="pathway">
    <text evidence="1">One-carbon metabolism; tetrahydrofolate interconversion.</text>
</comment>
<comment type="subunit">
    <text evidence="1">Homodimer.</text>
</comment>
<comment type="similarity">
    <text evidence="1">Belongs to the tetrahydrofolate dehydrogenase/cyclohydrolase family.</text>
</comment>
<accession>A9NB47</accession>
<reference key="1">
    <citation type="submission" date="2007-11" db="EMBL/GenBank/DDBJ databases">
        <title>Genome sequencing of phylogenetically and phenotypically diverse Coxiella burnetii isolates.</title>
        <authorList>
            <person name="Seshadri R."/>
            <person name="Samuel J.E."/>
        </authorList>
    </citation>
    <scope>NUCLEOTIDE SEQUENCE [LARGE SCALE GENOMIC DNA]</scope>
    <source>
        <strain>RSA 331 / Henzerling II</strain>
    </source>
</reference>
<protein>
    <recommendedName>
        <fullName evidence="1">Bifunctional protein FolD</fullName>
    </recommendedName>
    <domain>
        <recommendedName>
            <fullName evidence="1">Methylenetetrahydrofolate dehydrogenase</fullName>
            <ecNumber evidence="1">1.5.1.5</ecNumber>
        </recommendedName>
    </domain>
    <domain>
        <recommendedName>
            <fullName evidence="1">Methenyltetrahydrofolate cyclohydrolase</fullName>
            <ecNumber evidence="1">3.5.4.9</ecNumber>
        </recommendedName>
    </domain>
</protein>